<reference key="1">
    <citation type="journal article" date="2001" name="Science">
        <title>Comparative genomics of Listeria species.</title>
        <authorList>
            <person name="Glaser P."/>
            <person name="Frangeul L."/>
            <person name="Buchrieser C."/>
            <person name="Rusniok C."/>
            <person name="Amend A."/>
            <person name="Baquero F."/>
            <person name="Berche P."/>
            <person name="Bloecker H."/>
            <person name="Brandt P."/>
            <person name="Chakraborty T."/>
            <person name="Charbit A."/>
            <person name="Chetouani F."/>
            <person name="Couve E."/>
            <person name="de Daruvar A."/>
            <person name="Dehoux P."/>
            <person name="Domann E."/>
            <person name="Dominguez-Bernal G."/>
            <person name="Duchaud E."/>
            <person name="Durant L."/>
            <person name="Dussurget O."/>
            <person name="Entian K.-D."/>
            <person name="Fsihi H."/>
            <person name="Garcia-del Portillo F."/>
            <person name="Garrido P."/>
            <person name="Gautier L."/>
            <person name="Goebel W."/>
            <person name="Gomez-Lopez N."/>
            <person name="Hain T."/>
            <person name="Hauf J."/>
            <person name="Jackson D."/>
            <person name="Jones L.-M."/>
            <person name="Kaerst U."/>
            <person name="Kreft J."/>
            <person name="Kuhn M."/>
            <person name="Kunst F."/>
            <person name="Kurapkat G."/>
            <person name="Madueno E."/>
            <person name="Maitournam A."/>
            <person name="Mata Vicente J."/>
            <person name="Ng E."/>
            <person name="Nedjari H."/>
            <person name="Nordsiek G."/>
            <person name="Novella S."/>
            <person name="de Pablos B."/>
            <person name="Perez-Diaz J.-C."/>
            <person name="Purcell R."/>
            <person name="Remmel B."/>
            <person name="Rose M."/>
            <person name="Schlueter T."/>
            <person name="Simoes N."/>
            <person name="Tierrez A."/>
            <person name="Vazquez-Boland J.-A."/>
            <person name="Voss H."/>
            <person name="Wehland J."/>
            <person name="Cossart P."/>
        </authorList>
    </citation>
    <scope>NUCLEOTIDE SEQUENCE [LARGE SCALE GENOMIC DNA]</scope>
    <source>
        <strain>ATCC BAA-679 / EGD-e</strain>
    </source>
</reference>
<comment type="function">
    <text evidence="1">Catalyzes the formation of acetyl phosphate from acetate and ATP. Can also catalyze the reverse reaction.</text>
</comment>
<comment type="catalytic activity">
    <reaction evidence="1">
        <text>acetate + ATP = acetyl phosphate + ADP</text>
        <dbReference type="Rhea" id="RHEA:11352"/>
        <dbReference type="ChEBI" id="CHEBI:22191"/>
        <dbReference type="ChEBI" id="CHEBI:30089"/>
        <dbReference type="ChEBI" id="CHEBI:30616"/>
        <dbReference type="ChEBI" id="CHEBI:456216"/>
        <dbReference type="EC" id="2.7.2.1"/>
    </reaction>
</comment>
<comment type="cofactor">
    <cofactor evidence="1">
        <name>Mg(2+)</name>
        <dbReference type="ChEBI" id="CHEBI:18420"/>
    </cofactor>
    <cofactor evidence="1">
        <name>Mn(2+)</name>
        <dbReference type="ChEBI" id="CHEBI:29035"/>
    </cofactor>
    <text evidence="1">Mg(2+). Can also accept Mn(2+).</text>
</comment>
<comment type="pathway">
    <text evidence="1">Metabolic intermediate biosynthesis; acetyl-CoA biosynthesis; acetyl-CoA from acetate: step 1/2.</text>
</comment>
<comment type="subunit">
    <text evidence="1">Homodimer.</text>
</comment>
<comment type="subcellular location">
    <subcellularLocation>
        <location evidence="1">Cytoplasm</location>
    </subcellularLocation>
</comment>
<comment type="similarity">
    <text evidence="1">Belongs to the acetokinase family.</text>
</comment>
<gene>
    <name evidence="1" type="primary">ackA2</name>
    <name type="ordered locus">lmo1168</name>
</gene>
<keyword id="KW-0067">ATP-binding</keyword>
<keyword id="KW-0963">Cytoplasm</keyword>
<keyword id="KW-0418">Kinase</keyword>
<keyword id="KW-0460">Magnesium</keyword>
<keyword id="KW-0479">Metal-binding</keyword>
<keyword id="KW-0547">Nucleotide-binding</keyword>
<keyword id="KW-1185">Reference proteome</keyword>
<keyword id="KW-0808">Transferase</keyword>
<proteinExistence type="inferred from homology"/>
<name>ACKA2_LISMO</name>
<evidence type="ECO:0000255" key="1">
    <source>
        <dbReference type="HAMAP-Rule" id="MF_00020"/>
    </source>
</evidence>
<organism>
    <name type="scientific">Listeria monocytogenes serovar 1/2a (strain ATCC BAA-679 / EGD-e)</name>
    <dbReference type="NCBI Taxonomy" id="169963"/>
    <lineage>
        <taxon>Bacteria</taxon>
        <taxon>Bacillati</taxon>
        <taxon>Bacillota</taxon>
        <taxon>Bacilli</taxon>
        <taxon>Bacillales</taxon>
        <taxon>Listeriaceae</taxon>
        <taxon>Listeria</taxon>
    </lineage>
</organism>
<feature type="chain" id="PRO_0000107580" description="Acetate kinase 2">
    <location>
        <begin position="1"/>
        <end position="397"/>
    </location>
</feature>
<feature type="active site" description="Proton donor/acceptor" evidence="1">
    <location>
        <position position="146"/>
    </location>
</feature>
<feature type="binding site" evidence="1">
    <location>
        <position position="8"/>
    </location>
    <ligand>
        <name>Mg(2+)</name>
        <dbReference type="ChEBI" id="CHEBI:18420"/>
    </ligand>
</feature>
<feature type="binding site" evidence="1">
    <location>
        <position position="15"/>
    </location>
    <ligand>
        <name>ATP</name>
        <dbReference type="ChEBI" id="CHEBI:30616"/>
    </ligand>
</feature>
<feature type="binding site" evidence="1">
    <location>
        <position position="89"/>
    </location>
    <ligand>
        <name>substrate</name>
    </ligand>
</feature>
<feature type="binding site" evidence="1">
    <location>
        <begin position="206"/>
        <end position="210"/>
    </location>
    <ligand>
        <name>ATP</name>
        <dbReference type="ChEBI" id="CHEBI:30616"/>
    </ligand>
</feature>
<feature type="binding site" evidence="1">
    <location>
        <begin position="281"/>
        <end position="283"/>
    </location>
    <ligand>
        <name>ATP</name>
        <dbReference type="ChEBI" id="CHEBI:30616"/>
    </ligand>
</feature>
<feature type="binding site" evidence="1">
    <location>
        <begin position="329"/>
        <end position="333"/>
    </location>
    <ligand>
        <name>ATP</name>
        <dbReference type="ChEBI" id="CHEBI:30616"/>
    </ligand>
</feature>
<feature type="binding site" evidence="1">
    <location>
        <position position="380"/>
    </location>
    <ligand>
        <name>Mg(2+)</name>
        <dbReference type="ChEBI" id="CHEBI:18420"/>
    </ligand>
</feature>
<feature type="site" description="Transition state stabilizer" evidence="1">
    <location>
        <position position="178"/>
    </location>
</feature>
<feature type="site" description="Transition state stabilizer" evidence="1">
    <location>
        <position position="239"/>
    </location>
</feature>
<dbReference type="EC" id="2.7.2.1" evidence="1"/>
<dbReference type="EMBL" id="AL591978">
    <property type="protein sequence ID" value="CAC99246.1"/>
    <property type="molecule type" value="Genomic_DNA"/>
</dbReference>
<dbReference type="PIR" id="AH1220">
    <property type="entry name" value="AH1220"/>
</dbReference>
<dbReference type="RefSeq" id="NP_464693.1">
    <property type="nucleotide sequence ID" value="NC_003210.1"/>
</dbReference>
<dbReference type="RefSeq" id="WP_009932812.1">
    <property type="nucleotide sequence ID" value="NZ_CP149495.1"/>
</dbReference>
<dbReference type="SMR" id="Q8Y7V1"/>
<dbReference type="STRING" id="169963.gene:17593824"/>
<dbReference type="PaxDb" id="169963-lmo1168"/>
<dbReference type="EnsemblBacteria" id="CAC99246">
    <property type="protein sequence ID" value="CAC99246"/>
    <property type="gene ID" value="CAC99246"/>
</dbReference>
<dbReference type="GeneID" id="986132"/>
<dbReference type="KEGG" id="lmo:lmo1168"/>
<dbReference type="PATRIC" id="fig|169963.11.peg.1199"/>
<dbReference type="eggNOG" id="COG0282">
    <property type="taxonomic scope" value="Bacteria"/>
</dbReference>
<dbReference type="HOGENOM" id="CLU_020352_0_1_9"/>
<dbReference type="OrthoDB" id="9802453at2"/>
<dbReference type="PhylomeDB" id="Q8Y7V1"/>
<dbReference type="BioCyc" id="LMON169963:LMO1168-MONOMER"/>
<dbReference type="UniPathway" id="UPA00340">
    <property type="reaction ID" value="UER00458"/>
</dbReference>
<dbReference type="Proteomes" id="UP000000817">
    <property type="component" value="Chromosome"/>
</dbReference>
<dbReference type="GO" id="GO:0005737">
    <property type="term" value="C:cytoplasm"/>
    <property type="evidence" value="ECO:0007669"/>
    <property type="project" value="UniProtKB-SubCell"/>
</dbReference>
<dbReference type="GO" id="GO:0008776">
    <property type="term" value="F:acetate kinase activity"/>
    <property type="evidence" value="ECO:0000318"/>
    <property type="project" value="GO_Central"/>
</dbReference>
<dbReference type="GO" id="GO:0005524">
    <property type="term" value="F:ATP binding"/>
    <property type="evidence" value="ECO:0007669"/>
    <property type="project" value="UniProtKB-KW"/>
</dbReference>
<dbReference type="GO" id="GO:0000287">
    <property type="term" value="F:magnesium ion binding"/>
    <property type="evidence" value="ECO:0007669"/>
    <property type="project" value="UniProtKB-UniRule"/>
</dbReference>
<dbReference type="GO" id="GO:0006083">
    <property type="term" value="P:acetate metabolic process"/>
    <property type="evidence" value="ECO:0000318"/>
    <property type="project" value="GO_Central"/>
</dbReference>
<dbReference type="GO" id="GO:0006085">
    <property type="term" value="P:acetyl-CoA biosynthetic process"/>
    <property type="evidence" value="ECO:0007669"/>
    <property type="project" value="UniProtKB-UniRule"/>
</dbReference>
<dbReference type="CDD" id="cd24010">
    <property type="entry name" value="ASKHA_NBD_AcK_PK"/>
    <property type="match status" value="1"/>
</dbReference>
<dbReference type="FunFam" id="3.30.420.40:FF:000338">
    <property type="entry name" value="Acetate kinase"/>
    <property type="match status" value="1"/>
</dbReference>
<dbReference type="Gene3D" id="3.30.420.40">
    <property type="match status" value="2"/>
</dbReference>
<dbReference type="HAMAP" id="MF_00020">
    <property type="entry name" value="Acetate_kinase"/>
    <property type="match status" value="1"/>
</dbReference>
<dbReference type="InterPro" id="IPR004372">
    <property type="entry name" value="Ac/propionate_kinase"/>
</dbReference>
<dbReference type="InterPro" id="IPR000890">
    <property type="entry name" value="Aliphatic_acid_kin_short-chain"/>
</dbReference>
<dbReference type="InterPro" id="IPR023865">
    <property type="entry name" value="Aliphatic_acid_kinase_CS"/>
</dbReference>
<dbReference type="InterPro" id="IPR043129">
    <property type="entry name" value="ATPase_NBD"/>
</dbReference>
<dbReference type="NCBIfam" id="TIGR00016">
    <property type="entry name" value="ackA"/>
    <property type="match status" value="1"/>
</dbReference>
<dbReference type="PANTHER" id="PTHR21060">
    <property type="entry name" value="ACETATE KINASE"/>
    <property type="match status" value="1"/>
</dbReference>
<dbReference type="PANTHER" id="PTHR21060:SF15">
    <property type="entry name" value="ACETATE KINASE-RELATED"/>
    <property type="match status" value="1"/>
</dbReference>
<dbReference type="Pfam" id="PF00871">
    <property type="entry name" value="Acetate_kinase"/>
    <property type="match status" value="1"/>
</dbReference>
<dbReference type="PIRSF" id="PIRSF000722">
    <property type="entry name" value="Acetate_prop_kin"/>
    <property type="match status" value="1"/>
</dbReference>
<dbReference type="PRINTS" id="PR00471">
    <property type="entry name" value="ACETATEKNASE"/>
</dbReference>
<dbReference type="SUPFAM" id="SSF53067">
    <property type="entry name" value="Actin-like ATPase domain"/>
    <property type="match status" value="2"/>
</dbReference>
<dbReference type="PROSITE" id="PS01075">
    <property type="entry name" value="ACETATE_KINASE_1"/>
    <property type="match status" value="1"/>
</dbReference>
<dbReference type="PROSITE" id="PS01076">
    <property type="entry name" value="ACETATE_KINASE_2"/>
    <property type="match status" value="1"/>
</dbReference>
<protein>
    <recommendedName>
        <fullName evidence="1">Acetate kinase 2</fullName>
        <ecNumber evidence="1">2.7.2.1</ecNumber>
    </recommendedName>
    <alternativeName>
        <fullName evidence="1">Acetokinase 2</fullName>
    </alternativeName>
</protein>
<accession>Q8Y7V1</accession>
<sequence length="397" mass="43133">MHKIMAINAGSSSLKFQIFTMPGEEVLVKGLIERIGLPDAIFNMSFQNEKIKETRAINDHGKAVEILLEQLKAHQVINDLSEITGVGHRVAHGGEDFVTSCVVTDEVVKGIEAVTNLAPLHNPANIIGIKTFRELLPNAVSVAVFDTAFHQTIPQENFLYALPYELYEKHHIRKYGFHGTSHKYVAGKAAEVLEKPLEKLKIISCHLGNGASVCAIEAGKSVNTSMGFTPNAGLMMGTRSGTIDATIIPYLVDELGYSLDEVMHMMSNESGVLGVSGISSDFRDIEIAAKEGNSRALLTLRMFTGQICNYIGAYASAMNGCDALLFTAGVGENSPLIRQMVTEQLSYLGVTCHVTKNNAGDMIISNDNEAVKVCIIPTNEELMIARDVEKYAKQTIG</sequence>